<comment type="function">
    <text evidence="1">Catalyzes the interconversion between glucose-6-phosphate and alpha-glucose-1-phosphate. This is the first step in the biosynthesis of diglucosyl-diacylglycerol (Glc2-DAG), i.e. the predominant glycolipid found in the S.aureus membrane, which is also used as a membrane anchor for lipoteichoic acid (LTA) (By similarity).</text>
</comment>
<comment type="catalytic activity">
    <reaction>
        <text>alpha-D-glucose 1-phosphate = alpha-D-glucose 6-phosphate</text>
        <dbReference type="Rhea" id="RHEA:23536"/>
        <dbReference type="ChEBI" id="CHEBI:58225"/>
        <dbReference type="ChEBI" id="CHEBI:58601"/>
        <dbReference type="EC" id="5.4.2.2"/>
    </reaction>
</comment>
<comment type="cofactor">
    <cofactor evidence="1">
        <name>Mg(2+)</name>
        <dbReference type="ChEBI" id="CHEBI:18420"/>
    </cofactor>
    <text evidence="1">Binds 1 Mg(2+) ion per subunit.</text>
</comment>
<comment type="pathway">
    <text>Glycolipid metabolism; diglucosyl-diacylglycerol biosynthesis.</text>
</comment>
<comment type="similarity">
    <text evidence="2">Belongs to the phosphohexose mutase family.</text>
</comment>
<comment type="sequence caution" evidence="2">
    <conflict type="erroneous initiation">
        <sequence resource="EMBL-CDS" id="AAW37280"/>
    </conflict>
</comment>
<proteinExistence type="inferred from homology"/>
<dbReference type="EC" id="5.4.2.2"/>
<dbReference type="EMBL" id="CP000046">
    <property type="protein sequence ID" value="AAW37280.1"/>
    <property type="status" value="ALT_INIT"/>
    <property type="molecule type" value="Genomic_DNA"/>
</dbReference>
<dbReference type="SMR" id="Q5HD61"/>
<dbReference type="KEGG" id="sac:SACOL2501"/>
<dbReference type="HOGENOM" id="CLU_016950_0_0_9"/>
<dbReference type="UniPathway" id="UPA00894"/>
<dbReference type="Proteomes" id="UP000000530">
    <property type="component" value="Chromosome"/>
</dbReference>
<dbReference type="GO" id="GO:0000287">
    <property type="term" value="F:magnesium ion binding"/>
    <property type="evidence" value="ECO:0007669"/>
    <property type="project" value="InterPro"/>
</dbReference>
<dbReference type="GO" id="GO:0004614">
    <property type="term" value="F:phosphoglucomutase activity"/>
    <property type="evidence" value="ECO:0007669"/>
    <property type="project" value="UniProtKB-EC"/>
</dbReference>
<dbReference type="GO" id="GO:0008973">
    <property type="term" value="F:phosphopentomutase activity"/>
    <property type="evidence" value="ECO:0007669"/>
    <property type="project" value="TreeGrafter"/>
</dbReference>
<dbReference type="GO" id="GO:0009246">
    <property type="term" value="P:enterobacterial common antigen biosynthetic process"/>
    <property type="evidence" value="ECO:0007669"/>
    <property type="project" value="UniProtKB-UniPathway"/>
</dbReference>
<dbReference type="GO" id="GO:0006006">
    <property type="term" value="P:glucose metabolic process"/>
    <property type="evidence" value="ECO:0007669"/>
    <property type="project" value="UniProtKB-KW"/>
</dbReference>
<dbReference type="GO" id="GO:0006166">
    <property type="term" value="P:purine ribonucleoside salvage"/>
    <property type="evidence" value="ECO:0007669"/>
    <property type="project" value="TreeGrafter"/>
</dbReference>
<dbReference type="CDD" id="cd05799">
    <property type="entry name" value="PGM2"/>
    <property type="match status" value="1"/>
</dbReference>
<dbReference type="Gene3D" id="3.40.120.10">
    <property type="entry name" value="Alpha-D-Glucose-1,6-Bisphosphate, subunit A, domain 3"/>
    <property type="match status" value="3"/>
</dbReference>
<dbReference type="Gene3D" id="3.30.310.50">
    <property type="entry name" value="Alpha-D-phosphohexomutase, C-terminal domain"/>
    <property type="match status" value="1"/>
</dbReference>
<dbReference type="InterPro" id="IPR005844">
    <property type="entry name" value="A-D-PHexomutase_a/b/a-I"/>
</dbReference>
<dbReference type="InterPro" id="IPR016055">
    <property type="entry name" value="A-D-PHexomutase_a/b/a-I/II/III"/>
</dbReference>
<dbReference type="InterPro" id="IPR005845">
    <property type="entry name" value="A-D-PHexomutase_a/b/a-II"/>
</dbReference>
<dbReference type="InterPro" id="IPR005846">
    <property type="entry name" value="A-D-PHexomutase_a/b/a-III"/>
</dbReference>
<dbReference type="InterPro" id="IPR005843">
    <property type="entry name" value="A-D-PHexomutase_C"/>
</dbReference>
<dbReference type="InterPro" id="IPR036900">
    <property type="entry name" value="A-D-PHexomutase_C_sf"/>
</dbReference>
<dbReference type="InterPro" id="IPR016066">
    <property type="entry name" value="A-D-PHexomutase_CS"/>
</dbReference>
<dbReference type="InterPro" id="IPR005841">
    <property type="entry name" value="Alpha-D-phosphohexomutase_SF"/>
</dbReference>
<dbReference type="PANTHER" id="PTHR45745:SF1">
    <property type="entry name" value="PHOSPHOGLUCOMUTASE 2B-RELATED"/>
    <property type="match status" value="1"/>
</dbReference>
<dbReference type="PANTHER" id="PTHR45745">
    <property type="entry name" value="PHOSPHOMANNOMUTASE 45A"/>
    <property type="match status" value="1"/>
</dbReference>
<dbReference type="Pfam" id="PF02878">
    <property type="entry name" value="PGM_PMM_I"/>
    <property type="match status" value="1"/>
</dbReference>
<dbReference type="Pfam" id="PF02879">
    <property type="entry name" value="PGM_PMM_II"/>
    <property type="match status" value="1"/>
</dbReference>
<dbReference type="Pfam" id="PF02880">
    <property type="entry name" value="PGM_PMM_III"/>
    <property type="match status" value="1"/>
</dbReference>
<dbReference type="Pfam" id="PF00408">
    <property type="entry name" value="PGM_PMM_IV"/>
    <property type="match status" value="1"/>
</dbReference>
<dbReference type="PRINTS" id="PR00509">
    <property type="entry name" value="PGMPMM"/>
</dbReference>
<dbReference type="SUPFAM" id="SSF55957">
    <property type="entry name" value="Phosphoglucomutase, C-terminal domain"/>
    <property type="match status" value="1"/>
</dbReference>
<dbReference type="SUPFAM" id="SSF53738">
    <property type="entry name" value="Phosphoglucomutase, first 3 domains"/>
    <property type="match status" value="3"/>
</dbReference>
<dbReference type="PROSITE" id="PS00710">
    <property type="entry name" value="PGM_PMM"/>
    <property type="match status" value="1"/>
</dbReference>
<feature type="chain" id="PRO_0000308339" description="Phosphoglucomutase">
    <location>
        <begin position="1"/>
        <end position="552"/>
    </location>
</feature>
<feature type="active site" description="Phosphoserine intermediate" evidence="1">
    <location>
        <position position="143"/>
    </location>
</feature>
<feature type="binding site" description="via phosphate group" evidence="1">
    <location>
        <position position="143"/>
    </location>
    <ligand>
        <name>Mg(2+)</name>
        <dbReference type="ChEBI" id="CHEBI:18420"/>
    </ligand>
</feature>
<feature type="binding site" evidence="1">
    <location>
        <position position="295"/>
    </location>
    <ligand>
        <name>Mg(2+)</name>
        <dbReference type="ChEBI" id="CHEBI:18420"/>
    </ligand>
</feature>
<feature type="binding site" evidence="1">
    <location>
        <position position="297"/>
    </location>
    <ligand>
        <name>Mg(2+)</name>
        <dbReference type="ChEBI" id="CHEBI:18420"/>
    </ligand>
</feature>
<feature type="binding site" evidence="1">
    <location>
        <position position="299"/>
    </location>
    <ligand>
        <name>Mg(2+)</name>
        <dbReference type="ChEBI" id="CHEBI:18420"/>
    </ligand>
</feature>
<accession>Q5HD61</accession>
<name>PGCA_STAAC</name>
<keyword id="KW-0119">Carbohydrate metabolism</keyword>
<keyword id="KW-0313">Glucose metabolism</keyword>
<keyword id="KW-0413">Isomerase</keyword>
<keyword id="KW-0460">Magnesium</keyword>
<keyword id="KW-0479">Metal-binding</keyword>
<keyword id="KW-0597">Phosphoprotein</keyword>
<reference key="1">
    <citation type="journal article" date="2005" name="J. Bacteriol.">
        <title>Insights on evolution of virulence and resistance from the complete genome analysis of an early methicillin-resistant Staphylococcus aureus strain and a biofilm-producing methicillin-resistant Staphylococcus epidermidis strain.</title>
        <authorList>
            <person name="Gill S.R."/>
            <person name="Fouts D.E."/>
            <person name="Archer G.L."/>
            <person name="Mongodin E.F."/>
            <person name="DeBoy R.T."/>
            <person name="Ravel J."/>
            <person name="Paulsen I.T."/>
            <person name="Kolonay J.F."/>
            <person name="Brinkac L.M."/>
            <person name="Beanan M.J."/>
            <person name="Dodson R.J."/>
            <person name="Daugherty S.C."/>
            <person name="Madupu R."/>
            <person name="Angiuoli S.V."/>
            <person name="Durkin A.S."/>
            <person name="Haft D.H."/>
            <person name="Vamathevan J.J."/>
            <person name="Khouri H."/>
            <person name="Utterback T.R."/>
            <person name="Lee C."/>
            <person name="Dimitrov G."/>
            <person name="Jiang L."/>
            <person name="Qin H."/>
            <person name="Weidman J."/>
            <person name="Tran K."/>
            <person name="Kang K.H."/>
            <person name="Hance I.R."/>
            <person name="Nelson K.E."/>
            <person name="Fraser C.M."/>
        </authorList>
    </citation>
    <scope>NUCLEOTIDE SEQUENCE [LARGE SCALE GENOMIC DNA]</scope>
    <source>
        <strain>COL</strain>
    </source>
</reference>
<organism>
    <name type="scientific">Staphylococcus aureus (strain COL)</name>
    <dbReference type="NCBI Taxonomy" id="93062"/>
    <lineage>
        <taxon>Bacteria</taxon>
        <taxon>Bacillati</taxon>
        <taxon>Bacillota</taxon>
        <taxon>Bacilli</taxon>
        <taxon>Bacillales</taxon>
        <taxon>Staphylococcaceae</taxon>
        <taxon>Staphylococcus</taxon>
    </lineage>
</organism>
<sequence>MKGCLATMDKELWIERANDSLVKHFYEQQSDIEQREGFESKLTFGTAGIRGKFGLGEGRLNKFTIEKLALGLARYLNAQTNSPTIVIHYDIRHLSTEFAQIIANVLANHQITVYLPDTYKTTPELSFAVRNLNTTAGIMITASHNPKDYNGIKVYGSDGAQLSTDASELASRYIEEVGDPLQIDIPISKQNTSYIKPFPKSVTDDYMKHIQNMIGYIPKSDLQVVFTSLHGTSVPIVPELLQSLNFNQFNLVEAQCKPDPNFSSVQSANPEDHRAFDQAVELANKSHADLLISTDPDADRLGIAERDAHGHITYFNGNQIGALLLNYRIQQTSQLRHRLMIQSIVSSELTKSLARYNNVEYKEVLTGFKFIAQEIRQLDDHQNMIFAFEESYGFLSEPFVRDKDAVQIVPLIIKYASELKLYGKTLKDELEQIYQTVGRHEDTLFSHTLEGFEGKKKINAIMTKFRSNPPQEIQGLKVKAIEDYLTSEVYHLDKDTTSQINSPKSNVIRVLFDEGFIALRPSGTEPKIKLYVSLKCPNFDDVAQKINAMIFS</sequence>
<evidence type="ECO:0000250" key="1"/>
<evidence type="ECO:0000305" key="2"/>
<protein>
    <recommendedName>
        <fullName>Phosphoglucomutase</fullName>
        <shortName>PGM</shortName>
        <ecNumber>5.4.2.2</ecNumber>
    </recommendedName>
    <alternativeName>
        <fullName>Alpha-phosphoglucomutase</fullName>
    </alternativeName>
    <alternativeName>
        <fullName>Glucose phosphomutase</fullName>
    </alternativeName>
</protein>
<gene>
    <name type="primary">pgcA</name>
    <name type="ordered locus">SACOL2501</name>
</gene>